<proteinExistence type="inferred from homology"/>
<dbReference type="EC" id="3.5.4.16" evidence="2"/>
<dbReference type="EMBL" id="AE017143">
    <property type="protein sequence ID" value="AAP95969.1"/>
    <property type="molecule type" value="Genomic_DNA"/>
</dbReference>
<dbReference type="RefSeq" id="WP_010945018.1">
    <property type="nucleotide sequence ID" value="NC_002940.2"/>
</dbReference>
<dbReference type="SMR" id="Q7VM90"/>
<dbReference type="STRING" id="233412.HD_1103"/>
<dbReference type="KEGG" id="hdu:HD_1103"/>
<dbReference type="eggNOG" id="COG0302">
    <property type="taxonomic scope" value="Bacteria"/>
</dbReference>
<dbReference type="HOGENOM" id="CLU_049768_3_2_6"/>
<dbReference type="OrthoDB" id="9801207at2"/>
<dbReference type="UniPathway" id="UPA00848">
    <property type="reaction ID" value="UER00151"/>
</dbReference>
<dbReference type="Proteomes" id="UP000001022">
    <property type="component" value="Chromosome"/>
</dbReference>
<dbReference type="GO" id="GO:0005737">
    <property type="term" value="C:cytoplasm"/>
    <property type="evidence" value="ECO:0007669"/>
    <property type="project" value="TreeGrafter"/>
</dbReference>
<dbReference type="GO" id="GO:0005525">
    <property type="term" value="F:GTP binding"/>
    <property type="evidence" value="ECO:0007669"/>
    <property type="project" value="UniProtKB-KW"/>
</dbReference>
<dbReference type="GO" id="GO:0003934">
    <property type="term" value="F:GTP cyclohydrolase I activity"/>
    <property type="evidence" value="ECO:0007669"/>
    <property type="project" value="UniProtKB-UniRule"/>
</dbReference>
<dbReference type="GO" id="GO:0008270">
    <property type="term" value="F:zinc ion binding"/>
    <property type="evidence" value="ECO:0007669"/>
    <property type="project" value="UniProtKB-UniRule"/>
</dbReference>
<dbReference type="GO" id="GO:0006730">
    <property type="term" value="P:one-carbon metabolic process"/>
    <property type="evidence" value="ECO:0007669"/>
    <property type="project" value="UniProtKB-UniRule"/>
</dbReference>
<dbReference type="GO" id="GO:0006729">
    <property type="term" value="P:tetrahydrobiopterin biosynthetic process"/>
    <property type="evidence" value="ECO:0007669"/>
    <property type="project" value="TreeGrafter"/>
</dbReference>
<dbReference type="GO" id="GO:0046654">
    <property type="term" value="P:tetrahydrofolate biosynthetic process"/>
    <property type="evidence" value="ECO:0007669"/>
    <property type="project" value="UniProtKB-UniRule"/>
</dbReference>
<dbReference type="CDD" id="cd00642">
    <property type="entry name" value="GTP_cyclohydro1"/>
    <property type="match status" value="1"/>
</dbReference>
<dbReference type="FunFam" id="3.30.1130.10:FF:000001">
    <property type="entry name" value="GTP cyclohydrolase 1"/>
    <property type="match status" value="1"/>
</dbReference>
<dbReference type="Gene3D" id="1.10.286.10">
    <property type="match status" value="1"/>
</dbReference>
<dbReference type="Gene3D" id="3.30.1130.10">
    <property type="match status" value="1"/>
</dbReference>
<dbReference type="HAMAP" id="MF_00223">
    <property type="entry name" value="FolE"/>
    <property type="match status" value="1"/>
</dbReference>
<dbReference type="InterPro" id="IPR043133">
    <property type="entry name" value="GTP-CH-I_C/QueF"/>
</dbReference>
<dbReference type="InterPro" id="IPR043134">
    <property type="entry name" value="GTP-CH-I_N"/>
</dbReference>
<dbReference type="InterPro" id="IPR001474">
    <property type="entry name" value="GTP_CycHdrlase_I"/>
</dbReference>
<dbReference type="InterPro" id="IPR018234">
    <property type="entry name" value="GTP_CycHdrlase_I_CS"/>
</dbReference>
<dbReference type="InterPro" id="IPR020602">
    <property type="entry name" value="GTP_CycHdrlase_I_dom"/>
</dbReference>
<dbReference type="NCBIfam" id="TIGR00063">
    <property type="entry name" value="folE"/>
    <property type="match status" value="1"/>
</dbReference>
<dbReference type="NCBIfam" id="NF006824">
    <property type="entry name" value="PRK09347.1-1"/>
    <property type="match status" value="1"/>
</dbReference>
<dbReference type="NCBIfam" id="NF006825">
    <property type="entry name" value="PRK09347.1-2"/>
    <property type="match status" value="1"/>
</dbReference>
<dbReference type="NCBIfam" id="NF006826">
    <property type="entry name" value="PRK09347.1-3"/>
    <property type="match status" value="1"/>
</dbReference>
<dbReference type="PANTHER" id="PTHR11109:SF7">
    <property type="entry name" value="GTP CYCLOHYDROLASE 1"/>
    <property type="match status" value="1"/>
</dbReference>
<dbReference type="PANTHER" id="PTHR11109">
    <property type="entry name" value="GTP CYCLOHYDROLASE I"/>
    <property type="match status" value="1"/>
</dbReference>
<dbReference type="Pfam" id="PF01227">
    <property type="entry name" value="GTP_cyclohydroI"/>
    <property type="match status" value="1"/>
</dbReference>
<dbReference type="SUPFAM" id="SSF55620">
    <property type="entry name" value="Tetrahydrobiopterin biosynthesis enzymes-like"/>
    <property type="match status" value="1"/>
</dbReference>
<dbReference type="PROSITE" id="PS00859">
    <property type="entry name" value="GTP_CYCLOHYDROL_1_1"/>
    <property type="match status" value="1"/>
</dbReference>
<accession>Q7VM90</accession>
<name>GCH1_HAEDU</name>
<keyword id="KW-0342">GTP-binding</keyword>
<keyword id="KW-0378">Hydrolase</keyword>
<keyword id="KW-0479">Metal-binding</keyword>
<keyword id="KW-0547">Nucleotide-binding</keyword>
<keyword id="KW-0554">One-carbon metabolism</keyword>
<keyword id="KW-1185">Reference proteome</keyword>
<keyword id="KW-0862">Zinc</keyword>
<reference key="1">
    <citation type="submission" date="2003-06" db="EMBL/GenBank/DDBJ databases">
        <title>The complete genome sequence of Haemophilus ducreyi.</title>
        <authorList>
            <person name="Munson R.S. Jr."/>
            <person name="Ray W.C."/>
            <person name="Mahairas G."/>
            <person name="Sabo P."/>
            <person name="Mungur R."/>
            <person name="Johnson L."/>
            <person name="Nguyen D."/>
            <person name="Wang J."/>
            <person name="Forst C."/>
            <person name="Hood L."/>
        </authorList>
    </citation>
    <scope>NUCLEOTIDE SEQUENCE [LARGE SCALE GENOMIC DNA]</scope>
    <source>
        <strain>35000HP / ATCC 700724</strain>
    </source>
</reference>
<comment type="catalytic activity">
    <reaction evidence="2">
        <text>GTP + H2O = 7,8-dihydroneopterin 3'-triphosphate + formate + H(+)</text>
        <dbReference type="Rhea" id="RHEA:17473"/>
        <dbReference type="ChEBI" id="CHEBI:15377"/>
        <dbReference type="ChEBI" id="CHEBI:15378"/>
        <dbReference type="ChEBI" id="CHEBI:15740"/>
        <dbReference type="ChEBI" id="CHEBI:37565"/>
        <dbReference type="ChEBI" id="CHEBI:58462"/>
        <dbReference type="EC" id="3.5.4.16"/>
    </reaction>
</comment>
<comment type="pathway">
    <text evidence="2">Cofactor biosynthesis; 7,8-dihydroneopterin triphosphate biosynthesis; 7,8-dihydroneopterin triphosphate from GTP: step 1/1.</text>
</comment>
<comment type="subunit">
    <text evidence="1">Toroid-shaped homodecamer, composed of two pentamers of five dimers.</text>
</comment>
<comment type="similarity">
    <text evidence="2">Belongs to the GTP cyclohydrolase I family.</text>
</comment>
<organism>
    <name type="scientific">Haemophilus ducreyi (strain 35000HP / ATCC 700724)</name>
    <dbReference type="NCBI Taxonomy" id="233412"/>
    <lineage>
        <taxon>Bacteria</taxon>
        <taxon>Pseudomonadati</taxon>
        <taxon>Pseudomonadota</taxon>
        <taxon>Gammaproteobacteria</taxon>
        <taxon>Pasteurellales</taxon>
        <taxon>Pasteurellaceae</taxon>
        <taxon>Haemophilus</taxon>
    </lineage>
</organism>
<gene>
    <name evidence="2" type="primary">folE</name>
    <name type="ordered locus">HD_1103</name>
</gene>
<sequence>MSIISSEAQKVRQALIKKGIETPTIELTQDKDSRRAEIQQHMRSVLELLGLDLRDDSLEETPHRLAKMYVDEIFSGLDYATFPKITTIENRMKVSEMVLVDDITLTSTCEHHFVTIDGKVAVAYYPKKWVIGLSKINRVVQFFAQRPQVQERFTEQILTAFQTILETEDVAIYVKATHFCVKCRGIKDSNSYTVTSAFGGVFLDDRETRKEFLNLIHK</sequence>
<protein>
    <recommendedName>
        <fullName evidence="2">GTP cyclohydrolase 1</fullName>
        <ecNumber evidence="2">3.5.4.16</ecNumber>
    </recommendedName>
    <alternativeName>
        <fullName evidence="2">GTP cyclohydrolase I</fullName>
        <shortName evidence="2">GTP-CH-I</shortName>
    </alternativeName>
</protein>
<evidence type="ECO:0000250" key="1"/>
<evidence type="ECO:0000255" key="2">
    <source>
        <dbReference type="HAMAP-Rule" id="MF_00223"/>
    </source>
</evidence>
<feature type="chain" id="PRO_0000119410" description="GTP cyclohydrolase 1">
    <location>
        <begin position="1"/>
        <end position="218"/>
    </location>
</feature>
<feature type="binding site" evidence="2">
    <location>
        <position position="109"/>
    </location>
    <ligand>
        <name>Zn(2+)</name>
        <dbReference type="ChEBI" id="CHEBI:29105"/>
    </ligand>
</feature>
<feature type="binding site" evidence="2">
    <location>
        <position position="112"/>
    </location>
    <ligand>
        <name>Zn(2+)</name>
        <dbReference type="ChEBI" id="CHEBI:29105"/>
    </ligand>
</feature>
<feature type="binding site" evidence="2">
    <location>
        <position position="180"/>
    </location>
    <ligand>
        <name>Zn(2+)</name>
        <dbReference type="ChEBI" id="CHEBI:29105"/>
    </ligand>
</feature>